<accession>P06470</accession>
<feature type="signal peptide">
    <location>
        <begin position="1"/>
        <end position="19"/>
    </location>
</feature>
<feature type="chain" id="PRO_0000032282" description="B1-hordein">
    <location>
        <begin position="20"/>
        <end position="293"/>
    </location>
</feature>
<feature type="region of interest" description="Disordered" evidence="1">
    <location>
        <begin position="20"/>
        <end position="90"/>
    </location>
</feature>
<feature type="compositionally biased region" description="Pro residues" evidence="1">
    <location>
        <begin position="25"/>
        <end position="81"/>
    </location>
</feature>
<dbReference type="EMBL" id="X03103">
    <property type="protein sequence ID" value="CAA26889.1"/>
    <property type="molecule type" value="Genomic_DNA"/>
</dbReference>
<dbReference type="PIR" id="S07365">
    <property type="entry name" value="S07365"/>
</dbReference>
<dbReference type="ExpressionAtlas" id="P06470">
    <property type="expression patterns" value="baseline"/>
</dbReference>
<dbReference type="GO" id="GO:0045735">
    <property type="term" value="F:nutrient reservoir activity"/>
    <property type="evidence" value="ECO:0007669"/>
    <property type="project" value="UniProtKB-KW"/>
</dbReference>
<dbReference type="Gene3D" id="1.10.110.10">
    <property type="entry name" value="Plant lipid-transfer and hydrophobic proteins"/>
    <property type="match status" value="1"/>
</dbReference>
<dbReference type="InterPro" id="IPR036312">
    <property type="entry name" value="Bifun_inhib/LTP/seed_sf"/>
</dbReference>
<dbReference type="InterPro" id="IPR016140">
    <property type="entry name" value="Bifunc_inhib/LTP/seed_store"/>
</dbReference>
<dbReference type="InterPro" id="IPR001954">
    <property type="entry name" value="Glia_glutenin"/>
</dbReference>
<dbReference type="PANTHER" id="PTHR33454:SF18">
    <property type="entry name" value="GLUTENIN, LOW MOLECULAR WEIGHT SUBUNIT"/>
    <property type="match status" value="1"/>
</dbReference>
<dbReference type="PANTHER" id="PTHR33454">
    <property type="entry name" value="PROLAMIN PPROL 14P"/>
    <property type="match status" value="1"/>
</dbReference>
<dbReference type="Pfam" id="PF13016">
    <property type="entry name" value="Gliadin"/>
    <property type="match status" value="1"/>
</dbReference>
<dbReference type="PRINTS" id="PR00208">
    <property type="entry name" value="GLIADGLUTEN"/>
</dbReference>
<dbReference type="PRINTS" id="PR00209">
    <property type="entry name" value="GLIADIN"/>
</dbReference>
<dbReference type="SUPFAM" id="SSF47699">
    <property type="entry name" value="Bifunctional inhibitor/lipid-transfer protein/seed storage 2S albumin"/>
    <property type="match status" value="1"/>
</dbReference>
<organism>
    <name type="scientific">Hordeum vulgare</name>
    <name type="common">Barley</name>
    <dbReference type="NCBI Taxonomy" id="4513"/>
    <lineage>
        <taxon>Eukaryota</taxon>
        <taxon>Viridiplantae</taxon>
        <taxon>Streptophyta</taxon>
        <taxon>Embryophyta</taxon>
        <taxon>Tracheophyta</taxon>
        <taxon>Spermatophyta</taxon>
        <taxon>Magnoliopsida</taxon>
        <taxon>Liliopsida</taxon>
        <taxon>Poales</taxon>
        <taxon>Poaceae</taxon>
        <taxon>BOP clade</taxon>
        <taxon>Pooideae</taxon>
        <taxon>Triticodae</taxon>
        <taxon>Triticeae</taxon>
        <taxon>Hordeinae</taxon>
        <taxon>Hordeum</taxon>
    </lineage>
</organism>
<name>HOR1_HORVU</name>
<keyword id="KW-0903">Direct protein sequencing</keyword>
<keyword id="KW-0708">Seed storage protein</keyword>
<keyword id="KW-0732">Signal</keyword>
<keyword id="KW-0758">Storage protein</keyword>
<sequence>MKTFLIFALLAIAATSTIAQQQPFPQQPIPQQPQPYPQQPQPYPQQPFPPQQPFPQQPVPQQPQPYPQQPFPPQQPFPQQPPFWQQKPFPQQPPFGLQQPILSQQQPCTPQQTPLPQGQLYQTLLQLQIQYVHPSILQQLNPCKVFLQQQCSPVPVPQRIARSQMLQQSSCHVLQQQCCQQLPQIPEQFRHEAIRAIVYSIFLQEQPQQLVEGVSQPQQQLWPQQVGQCSFQQPQPQQVGQQQQVPQSAFLQPHQIAQLEATTSIALRTLPMMCSVNVPLYRILRGVGPSVGV</sequence>
<evidence type="ECO:0000256" key="1">
    <source>
        <dbReference type="SAM" id="MobiDB-lite"/>
    </source>
</evidence>
<evidence type="ECO:0000305" key="2"/>
<reference key="1">
    <citation type="journal article" date="1985" name="Nucleic Acids Res.">
        <title>Nucleotide sequence of a B1 hordein gene and the identification of possible upstream regulatory elements in endosperm storage protein genes from barley, wheat and maize.</title>
        <authorList>
            <person name="Forde B.G."/>
            <person name="Heyworth A."/>
            <person name="Pywell J."/>
            <person name="Kreis M."/>
        </authorList>
    </citation>
    <scope>NUCLEOTIDE SEQUENCE [GENOMIC DNA]</scope>
</reference>
<reference key="2">
    <citation type="journal article" date="2000" name="Electrophoresis">
        <title>Separation and characterization of basic barley seed proteins.</title>
        <authorList>
            <person name="Kristoffersen H.E."/>
            <person name="Flengsrud R."/>
        </authorList>
    </citation>
    <scope>PROTEIN SEQUENCE OF 272-283 AND 286-292</scope>
    <source>
        <strain>cv. Bomi</strain>
        <tissue>Starchy endosperm</tissue>
    </source>
</reference>
<comment type="function">
    <text>Sulfur-rich seed storage protein.</text>
</comment>
<comment type="tissue specificity">
    <text>Developing endosperm.</text>
</comment>
<comment type="similarity">
    <text evidence="2">Belongs to the gliadin/glutenin family.</text>
</comment>
<proteinExistence type="evidence at protein level"/>
<protein>
    <recommendedName>
        <fullName>B1-hordein</fullName>
    </recommendedName>
</protein>